<reference key="1">
    <citation type="journal article" date="2009" name="PLoS Pathog.">
        <title>Molecular evolutionary consequences of niche restriction in Francisella tularensis, a facultative intracellular pathogen.</title>
        <authorList>
            <person name="Larsson P."/>
            <person name="Elfsmark D."/>
            <person name="Svensson K."/>
            <person name="Wikstroem P."/>
            <person name="Forsman M."/>
            <person name="Brettin T."/>
            <person name="Keim P."/>
            <person name="Johansson A."/>
        </authorList>
    </citation>
    <scope>NUCLEOTIDE SEQUENCE [LARGE SCALE GENOMIC DNA]</scope>
    <source>
        <strain>FSC147</strain>
    </source>
</reference>
<gene>
    <name evidence="1" type="primary">rplW</name>
    <name type="ordered locus">FTM_1525</name>
</gene>
<accession>B2SDY3</accession>
<proteinExistence type="inferred from homology"/>
<comment type="function">
    <text evidence="1">One of the early assembly proteins it binds 23S rRNA. One of the proteins that surrounds the polypeptide exit tunnel on the outside of the ribosome. Forms the main docking site for trigger factor binding to the ribosome.</text>
</comment>
<comment type="subunit">
    <text evidence="1">Part of the 50S ribosomal subunit. Contacts protein L29, and trigger factor when it is bound to the ribosome.</text>
</comment>
<comment type="similarity">
    <text evidence="1">Belongs to the universal ribosomal protein uL23 family.</text>
</comment>
<organism>
    <name type="scientific">Francisella tularensis subsp. mediasiatica (strain FSC147)</name>
    <dbReference type="NCBI Taxonomy" id="441952"/>
    <lineage>
        <taxon>Bacteria</taxon>
        <taxon>Pseudomonadati</taxon>
        <taxon>Pseudomonadota</taxon>
        <taxon>Gammaproteobacteria</taxon>
        <taxon>Thiotrichales</taxon>
        <taxon>Francisellaceae</taxon>
        <taxon>Francisella</taxon>
    </lineage>
</organism>
<dbReference type="EMBL" id="CP000915">
    <property type="protein sequence ID" value="ACD31347.1"/>
    <property type="molecule type" value="Genomic_DNA"/>
</dbReference>
<dbReference type="SMR" id="B2SDY3"/>
<dbReference type="KEGG" id="ftm:FTM_1525"/>
<dbReference type="HOGENOM" id="CLU_037562_3_1_6"/>
<dbReference type="GO" id="GO:1990904">
    <property type="term" value="C:ribonucleoprotein complex"/>
    <property type="evidence" value="ECO:0007669"/>
    <property type="project" value="UniProtKB-KW"/>
</dbReference>
<dbReference type="GO" id="GO:0005840">
    <property type="term" value="C:ribosome"/>
    <property type="evidence" value="ECO:0007669"/>
    <property type="project" value="UniProtKB-KW"/>
</dbReference>
<dbReference type="GO" id="GO:0019843">
    <property type="term" value="F:rRNA binding"/>
    <property type="evidence" value="ECO:0007669"/>
    <property type="project" value="UniProtKB-UniRule"/>
</dbReference>
<dbReference type="GO" id="GO:0003735">
    <property type="term" value="F:structural constituent of ribosome"/>
    <property type="evidence" value="ECO:0007669"/>
    <property type="project" value="InterPro"/>
</dbReference>
<dbReference type="GO" id="GO:0006412">
    <property type="term" value="P:translation"/>
    <property type="evidence" value="ECO:0007669"/>
    <property type="project" value="UniProtKB-UniRule"/>
</dbReference>
<dbReference type="FunFam" id="3.30.70.330:FF:000001">
    <property type="entry name" value="50S ribosomal protein L23"/>
    <property type="match status" value="1"/>
</dbReference>
<dbReference type="Gene3D" id="3.30.70.330">
    <property type="match status" value="1"/>
</dbReference>
<dbReference type="HAMAP" id="MF_01369_B">
    <property type="entry name" value="Ribosomal_uL23_B"/>
    <property type="match status" value="1"/>
</dbReference>
<dbReference type="InterPro" id="IPR012677">
    <property type="entry name" value="Nucleotide-bd_a/b_plait_sf"/>
</dbReference>
<dbReference type="InterPro" id="IPR013025">
    <property type="entry name" value="Ribosomal_uL23-like"/>
</dbReference>
<dbReference type="InterPro" id="IPR012678">
    <property type="entry name" value="Ribosomal_uL23/eL15/eS24_sf"/>
</dbReference>
<dbReference type="InterPro" id="IPR001014">
    <property type="entry name" value="Ribosomal_uL23_CS"/>
</dbReference>
<dbReference type="NCBIfam" id="NF004359">
    <property type="entry name" value="PRK05738.1-3"/>
    <property type="match status" value="1"/>
</dbReference>
<dbReference type="NCBIfam" id="NF004363">
    <property type="entry name" value="PRK05738.2-4"/>
    <property type="match status" value="1"/>
</dbReference>
<dbReference type="PANTHER" id="PTHR11620">
    <property type="entry name" value="60S RIBOSOMAL PROTEIN L23A"/>
    <property type="match status" value="1"/>
</dbReference>
<dbReference type="Pfam" id="PF00276">
    <property type="entry name" value="Ribosomal_L23"/>
    <property type="match status" value="1"/>
</dbReference>
<dbReference type="SUPFAM" id="SSF54189">
    <property type="entry name" value="Ribosomal proteins S24e, L23 and L15e"/>
    <property type="match status" value="1"/>
</dbReference>
<dbReference type="PROSITE" id="PS00050">
    <property type="entry name" value="RIBOSOMAL_L23"/>
    <property type="match status" value="1"/>
</dbReference>
<name>RL23_FRATM</name>
<evidence type="ECO:0000255" key="1">
    <source>
        <dbReference type="HAMAP-Rule" id="MF_01369"/>
    </source>
</evidence>
<evidence type="ECO:0000305" key="2"/>
<keyword id="KW-0687">Ribonucleoprotein</keyword>
<keyword id="KW-0689">Ribosomal protein</keyword>
<keyword id="KW-0694">RNA-binding</keyword>
<keyword id="KW-0699">rRNA-binding</keyword>
<protein>
    <recommendedName>
        <fullName evidence="1">Large ribosomal subunit protein uL23</fullName>
    </recommendedName>
    <alternativeName>
        <fullName evidence="2">50S ribosomal protein L23</fullName>
    </alternativeName>
</protein>
<feature type="chain" id="PRO_1000144568" description="Large ribosomal subunit protein uL23">
    <location>
        <begin position="1"/>
        <end position="99"/>
    </location>
</feature>
<sequence>MSSQEKLLKTVIRPHVSDKTYGLSDANSTIVFEVARFANKQDVKNAVEKLFEVKVESVNILNVKGKARRFGRVEGRTKAWKKAYVKLAEGHDINFVGAE</sequence>